<proteinExistence type="inferred from homology"/>
<keyword id="KW-1003">Cell membrane</keyword>
<keyword id="KW-0472">Membrane</keyword>
<keyword id="KW-0808">Transferase</keyword>
<keyword id="KW-0812">Transmembrane</keyword>
<keyword id="KW-1133">Transmembrane helix</keyword>
<sequence>MINPIALKCGPLAIHWYALCILSGLVLAVYLASKEAPKKGISSDAIFDFILIAFPLAIVGARIYYVIFEWSYYVKHLDEIIAIWNGGIAIYGGLITGALVLLAYCYNKVLNPIHFLDIAAPSVMVAQAIGRWGNFINQEAYGKAVSQLNYLPSFIQKQMFIEGSYRIPTFLYESLWNLLGFVIIMMWRRKPKSLLDGEIFAFYLIWYGSGRLVIEGMRTDSLMFLGIRISQYVSALLIIIGLIFVIKRRRQKGISYYQE</sequence>
<gene>
    <name evidence="1" type="primary">lgt</name>
    <name type="ordered locus">SpyM51376</name>
</gene>
<evidence type="ECO:0000255" key="1">
    <source>
        <dbReference type="HAMAP-Rule" id="MF_01147"/>
    </source>
</evidence>
<reference key="1">
    <citation type="journal article" date="2007" name="J. Bacteriol.">
        <title>Complete genome of acute rheumatic fever-associated serotype M5 Streptococcus pyogenes strain Manfredo.</title>
        <authorList>
            <person name="Holden M.T.G."/>
            <person name="Scott A."/>
            <person name="Cherevach I."/>
            <person name="Chillingworth T."/>
            <person name="Churcher C."/>
            <person name="Cronin A."/>
            <person name="Dowd L."/>
            <person name="Feltwell T."/>
            <person name="Hamlin N."/>
            <person name="Holroyd S."/>
            <person name="Jagels K."/>
            <person name="Moule S."/>
            <person name="Mungall K."/>
            <person name="Quail M.A."/>
            <person name="Price C."/>
            <person name="Rabbinowitsch E."/>
            <person name="Sharp S."/>
            <person name="Skelton J."/>
            <person name="Whitehead S."/>
            <person name="Barrell B.G."/>
            <person name="Kehoe M."/>
            <person name="Parkhill J."/>
        </authorList>
    </citation>
    <scope>NUCLEOTIDE SEQUENCE [LARGE SCALE GENOMIC DNA]</scope>
    <source>
        <strain>Manfredo</strain>
    </source>
</reference>
<dbReference type="EC" id="2.5.1.145" evidence="1"/>
<dbReference type="EMBL" id="AM295007">
    <property type="protein sequence ID" value="CAM30704.1"/>
    <property type="molecule type" value="Genomic_DNA"/>
</dbReference>
<dbReference type="RefSeq" id="WP_002990577.1">
    <property type="nucleotide sequence ID" value="NC_009332.1"/>
</dbReference>
<dbReference type="SMR" id="A2RFS5"/>
<dbReference type="GeneID" id="69901201"/>
<dbReference type="KEGG" id="spf:SpyM51376"/>
<dbReference type="HOGENOM" id="CLU_013386_0_1_9"/>
<dbReference type="UniPathway" id="UPA00664"/>
<dbReference type="GO" id="GO:0005886">
    <property type="term" value="C:plasma membrane"/>
    <property type="evidence" value="ECO:0007669"/>
    <property type="project" value="UniProtKB-SubCell"/>
</dbReference>
<dbReference type="GO" id="GO:0008961">
    <property type="term" value="F:phosphatidylglycerol-prolipoprotein diacylglyceryl transferase activity"/>
    <property type="evidence" value="ECO:0007669"/>
    <property type="project" value="UniProtKB-UniRule"/>
</dbReference>
<dbReference type="GO" id="GO:0042158">
    <property type="term" value="P:lipoprotein biosynthetic process"/>
    <property type="evidence" value="ECO:0007669"/>
    <property type="project" value="UniProtKB-UniRule"/>
</dbReference>
<dbReference type="HAMAP" id="MF_01147">
    <property type="entry name" value="Lgt"/>
    <property type="match status" value="1"/>
</dbReference>
<dbReference type="InterPro" id="IPR001640">
    <property type="entry name" value="Lgt"/>
</dbReference>
<dbReference type="NCBIfam" id="TIGR00544">
    <property type="entry name" value="lgt"/>
    <property type="match status" value="1"/>
</dbReference>
<dbReference type="PANTHER" id="PTHR30589:SF0">
    <property type="entry name" value="PHOSPHATIDYLGLYCEROL--PROLIPOPROTEIN DIACYLGLYCERYL TRANSFERASE"/>
    <property type="match status" value="1"/>
</dbReference>
<dbReference type="PANTHER" id="PTHR30589">
    <property type="entry name" value="PROLIPOPROTEIN DIACYLGLYCERYL TRANSFERASE"/>
    <property type="match status" value="1"/>
</dbReference>
<dbReference type="Pfam" id="PF01790">
    <property type="entry name" value="LGT"/>
    <property type="match status" value="1"/>
</dbReference>
<dbReference type="PROSITE" id="PS01311">
    <property type="entry name" value="LGT"/>
    <property type="match status" value="1"/>
</dbReference>
<feature type="chain" id="PRO_1000053514" description="Phosphatidylglycerol--prolipoprotein diacylglyceryl transferase">
    <location>
        <begin position="1"/>
        <end position="259"/>
    </location>
</feature>
<feature type="transmembrane region" description="Helical" evidence="1">
    <location>
        <begin position="12"/>
        <end position="32"/>
    </location>
</feature>
<feature type="transmembrane region" description="Helical" evidence="1">
    <location>
        <begin position="41"/>
        <end position="61"/>
    </location>
</feature>
<feature type="transmembrane region" description="Helical" evidence="1">
    <location>
        <begin position="80"/>
        <end position="100"/>
    </location>
</feature>
<feature type="transmembrane region" description="Helical" evidence="1">
    <location>
        <begin position="109"/>
        <end position="129"/>
    </location>
</feature>
<feature type="transmembrane region" description="Helical" evidence="1">
    <location>
        <begin position="167"/>
        <end position="187"/>
    </location>
</feature>
<feature type="transmembrane region" description="Helical" evidence="1">
    <location>
        <begin position="194"/>
        <end position="214"/>
    </location>
</feature>
<feature type="transmembrane region" description="Helical" evidence="1">
    <location>
        <begin position="226"/>
        <end position="246"/>
    </location>
</feature>
<feature type="binding site" evidence="1">
    <location>
        <position position="131"/>
    </location>
    <ligand>
        <name>a 1,2-diacyl-sn-glycero-3-phospho-(1'-sn-glycerol)</name>
        <dbReference type="ChEBI" id="CHEBI:64716"/>
    </ligand>
</feature>
<name>LGT_STRPG</name>
<organism>
    <name type="scientific">Streptococcus pyogenes serotype M5 (strain Manfredo)</name>
    <dbReference type="NCBI Taxonomy" id="160491"/>
    <lineage>
        <taxon>Bacteria</taxon>
        <taxon>Bacillati</taxon>
        <taxon>Bacillota</taxon>
        <taxon>Bacilli</taxon>
        <taxon>Lactobacillales</taxon>
        <taxon>Streptococcaceae</taxon>
        <taxon>Streptococcus</taxon>
    </lineage>
</organism>
<comment type="function">
    <text evidence="1">Catalyzes the transfer of the diacylglyceryl group from phosphatidylglycerol to the sulfhydryl group of the N-terminal cysteine of a prolipoprotein, the first step in the formation of mature lipoproteins.</text>
</comment>
<comment type="catalytic activity">
    <reaction evidence="1">
        <text>L-cysteinyl-[prolipoprotein] + a 1,2-diacyl-sn-glycero-3-phospho-(1'-sn-glycerol) = an S-1,2-diacyl-sn-glyceryl-L-cysteinyl-[prolipoprotein] + sn-glycerol 1-phosphate + H(+)</text>
        <dbReference type="Rhea" id="RHEA:56712"/>
        <dbReference type="Rhea" id="RHEA-COMP:14679"/>
        <dbReference type="Rhea" id="RHEA-COMP:14680"/>
        <dbReference type="ChEBI" id="CHEBI:15378"/>
        <dbReference type="ChEBI" id="CHEBI:29950"/>
        <dbReference type="ChEBI" id="CHEBI:57685"/>
        <dbReference type="ChEBI" id="CHEBI:64716"/>
        <dbReference type="ChEBI" id="CHEBI:140658"/>
        <dbReference type="EC" id="2.5.1.145"/>
    </reaction>
</comment>
<comment type="pathway">
    <text evidence="1">Protein modification; lipoprotein biosynthesis (diacylglyceryl transfer).</text>
</comment>
<comment type="subcellular location">
    <subcellularLocation>
        <location evidence="1">Cell membrane</location>
        <topology evidence="1">Multi-pass membrane protein</topology>
    </subcellularLocation>
</comment>
<comment type="similarity">
    <text evidence="1">Belongs to the Lgt family.</text>
</comment>
<accession>A2RFS5</accession>
<protein>
    <recommendedName>
        <fullName evidence="1">Phosphatidylglycerol--prolipoprotein diacylglyceryl transferase</fullName>
        <ecNumber evidence="1">2.5.1.145</ecNumber>
    </recommendedName>
</protein>